<dbReference type="EMBL" id="D10470">
    <property type="protein sequence ID" value="BAA21332.1"/>
    <property type="molecule type" value="Genomic_DNA"/>
</dbReference>
<dbReference type="EMBL" id="Z86099">
    <property type="protein sequence ID" value="CAB06764.1"/>
    <property type="molecule type" value="Genomic_DNA"/>
</dbReference>
<dbReference type="PIR" id="JQ1497">
    <property type="entry name" value="WMBEHL"/>
</dbReference>
<dbReference type="RefSeq" id="YP_009137155.1">
    <property type="nucleotide sequence ID" value="NC_001798.2"/>
</dbReference>
<dbReference type="DNASU" id="1487326"/>
<dbReference type="GeneID" id="1487326"/>
<dbReference type="KEGG" id="vg:1487326"/>
<dbReference type="Proteomes" id="UP000001874">
    <property type="component" value="Segment"/>
</dbReference>
<dbReference type="GO" id="GO:0042025">
    <property type="term" value="C:host cell nucleus"/>
    <property type="evidence" value="ECO:0007669"/>
    <property type="project" value="UniProtKB-SubCell"/>
</dbReference>
<dbReference type="InterPro" id="IPR004958">
    <property type="entry name" value="Herpes_UL4"/>
</dbReference>
<dbReference type="Pfam" id="PF03277">
    <property type="entry name" value="Herpes_UL4"/>
    <property type="match status" value="1"/>
</dbReference>
<organism>
    <name type="scientific">Human herpesvirus 2 (strain HG52)</name>
    <name type="common">HHV-2</name>
    <name type="synonym">Human herpes simplex virus 2</name>
    <dbReference type="NCBI Taxonomy" id="10315"/>
    <lineage>
        <taxon>Viruses</taxon>
        <taxon>Duplodnaviria</taxon>
        <taxon>Heunggongvirae</taxon>
        <taxon>Peploviricota</taxon>
        <taxon>Herviviricetes</taxon>
        <taxon>Herpesvirales</taxon>
        <taxon>Orthoherpesviridae</taxon>
        <taxon>Alphaherpesvirinae</taxon>
        <taxon>Simplexvirus</taxon>
        <taxon>Simplexvirus humanalpha2</taxon>
        <taxon>Human herpesvirus 2</taxon>
    </lineage>
</organism>
<comment type="subcellular location">
    <subcellularLocation>
        <location evidence="1">Host nucleus</location>
    </subcellularLocation>
</comment>
<comment type="similarity">
    <text evidence="2">Belongs to the alphaherpesvirinae HHV-1 UL4 family.</text>
</comment>
<organismHost>
    <name type="scientific">Homo sapiens</name>
    <name type="common">Human</name>
    <dbReference type="NCBI Taxonomy" id="9606"/>
</organismHost>
<feature type="chain" id="PRO_0000115899" description="Nuclear protein UL4">
    <location>
        <begin position="1"/>
        <end position="201"/>
    </location>
</feature>
<sequence length="201" mass="21807">MGNPQTTIAYSLHHPRASLTSALPDAAQVVHVFESGTRAVLTRGRARQDRLPRGGVVIQHTPIGLLVIIDCRAEFCAYRFIGRASTQRLERWWDAHMYAYPFDSWVSSSHGESVRSATAGILTVVWTPDTIYITATIYGTAPEAARGCDNAPLDVRPTTPPAPVSPTAGEFPANTTDLLVEVLREIQISPTLDDADPTPGT</sequence>
<accession>P28280</accession>
<evidence type="ECO:0000250" key="1"/>
<evidence type="ECO:0000305" key="2"/>
<keyword id="KW-1048">Host nucleus</keyword>
<keyword id="KW-1185">Reference proteome</keyword>
<protein>
    <recommendedName>
        <fullName>Nuclear protein UL4</fullName>
    </recommendedName>
</protein>
<gene>
    <name type="ORF">UL4</name>
</gene>
<name>NP04_HHV2H</name>
<reference key="1">
    <citation type="journal article" date="1991" name="J. Gen. Virol.">
        <title>Comparative sequence analysis of the long repeat regions and adjoining parts of the long unique regions in the genomes of herpes simplex viruses types 1 and 2.</title>
        <authorList>
            <person name="McGeoch D.J."/>
            <person name="Cunningham C."/>
            <person name="McIntyre G."/>
            <person name="Dolan A."/>
        </authorList>
    </citation>
    <scope>NUCLEOTIDE SEQUENCE [GENOMIC DNA]</scope>
</reference>
<reference key="2">
    <citation type="journal article" date="1998" name="J. Virol.">
        <title>The genome sequence of herpes simplex virus type 2.</title>
        <authorList>
            <person name="Dolan A."/>
            <person name="Jamieson F.E."/>
            <person name="Cunningham C."/>
            <person name="Barnett B.C."/>
            <person name="McGeoch D.J."/>
        </authorList>
    </citation>
    <scope>NUCLEOTIDE SEQUENCE [LARGE SCALE GENOMIC DNA]</scope>
</reference>
<proteinExistence type="inferred from homology"/>